<feature type="chain" id="PRO_1000184737" description="ATP synthase subunit delta">
    <location>
        <begin position="1"/>
        <end position="181"/>
    </location>
</feature>
<accession>Q88UU0</accession>
<accession>F9UQR6</accession>
<proteinExistence type="inferred from homology"/>
<protein>
    <recommendedName>
        <fullName evidence="1">ATP synthase subunit delta</fullName>
    </recommendedName>
    <alternativeName>
        <fullName evidence="1">ATP synthase F(1) sector subunit delta</fullName>
    </alternativeName>
    <alternativeName>
        <fullName evidence="1">F-type ATPase subunit delta</fullName>
        <shortName evidence="1">F-ATPase subunit delta</shortName>
    </alternativeName>
</protein>
<keyword id="KW-0066">ATP synthesis</keyword>
<keyword id="KW-1003">Cell membrane</keyword>
<keyword id="KW-0139">CF(1)</keyword>
<keyword id="KW-0375">Hydrogen ion transport</keyword>
<keyword id="KW-0406">Ion transport</keyword>
<keyword id="KW-0472">Membrane</keyword>
<keyword id="KW-1185">Reference proteome</keyword>
<keyword id="KW-0813">Transport</keyword>
<reference key="1">
    <citation type="journal article" date="2003" name="Proc. Natl. Acad. Sci. U.S.A.">
        <title>Complete genome sequence of Lactobacillus plantarum WCFS1.</title>
        <authorList>
            <person name="Kleerebezem M."/>
            <person name="Boekhorst J."/>
            <person name="van Kranenburg R."/>
            <person name="Molenaar D."/>
            <person name="Kuipers O.P."/>
            <person name="Leer R."/>
            <person name="Tarchini R."/>
            <person name="Peters S.A."/>
            <person name="Sandbrink H.M."/>
            <person name="Fiers M.W.E.J."/>
            <person name="Stiekema W."/>
            <person name="Klein Lankhorst R.M."/>
            <person name="Bron P.A."/>
            <person name="Hoffer S.M."/>
            <person name="Nierop Groot M.N."/>
            <person name="Kerkhoven R."/>
            <person name="De Vries M."/>
            <person name="Ursing B."/>
            <person name="De Vos W.M."/>
            <person name="Siezen R.J."/>
        </authorList>
    </citation>
    <scope>NUCLEOTIDE SEQUENCE [LARGE SCALE GENOMIC DNA]</scope>
    <source>
        <strain>ATCC BAA-793 / NCIMB 8826 / WCFS1</strain>
    </source>
</reference>
<reference key="2">
    <citation type="journal article" date="2012" name="J. Bacteriol.">
        <title>Complete resequencing and reannotation of the Lactobacillus plantarum WCFS1 genome.</title>
        <authorList>
            <person name="Siezen R.J."/>
            <person name="Francke C."/>
            <person name="Renckens B."/>
            <person name="Boekhorst J."/>
            <person name="Wels M."/>
            <person name="Kleerebezem M."/>
            <person name="van Hijum S.A."/>
        </authorList>
    </citation>
    <scope>NUCLEOTIDE SEQUENCE [LARGE SCALE GENOMIC DNA]</scope>
    <scope>GENOME REANNOTATION</scope>
    <source>
        <strain>ATCC BAA-793 / NCIMB 8826 / WCFS1</strain>
    </source>
</reference>
<sequence>MSLDNLTIASRYSKALFELAVEKDQTEAFLAELKQLRQVFVDNPQLAEVLSGSLLPVDQKQTTLSTLTDHASEYIKNFIQMLYDYGRMSNLVGIVDAFEARFDESRKIVHAEVTSAVKLSDEQADAIAKAFAKRVGANQVVLSRKVDEAIIGGVIVKSNNQTFDGSVALQLTNLRRALINN</sequence>
<evidence type="ECO:0000255" key="1">
    <source>
        <dbReference type="HAMAP-Rule" id="MF_01416"/>
    </source>
</evidence>
<name>ATPD_LACPL</name>
<gene>
    <name evidence="1" type="primary">atpH</name>
    <name type="ordered locus">lp_2367</name>
</gene>
<organism>
    <name type="scientific">Lactiplantibacillus plantarum (strain ATCC BAA-793 / NCIMB 8826 / WCFS1)</name>
    <name type="common">Lactobacillus plantarum</name>
    <dbReference type="NCBI Taxonomy" id="220668"/>
    <lineage>
        <taxon>Bacteria</taxon>
        <taxon>Bacillati</taxon>
        <taxon>Bacillota</taxon>
        <taxon>Bacilli</taxon>
        <taxon>Lactobacillales</taxon>
        <taxon>Lactobacillaceae</taxon>
        <taxon>Lactiplantibacillus</taxon>
    </lineage>
</organism>
<comment type="function">
    <text evidence="1">F(1)F(0) ATP synthase produces ATP from ADP in the presence of a proton or sodium gradient. F-type ATPases consist of two structural domains, F(1) containing the extramembraneous catalytic core and F(0) containing the membrane proton channel, linked together by a central stalk and a peripheral stalk. During catalysis, ATP synthesis in the catalytic domain of F(1) is coupled via a rotary mechanism of the central stalk subunits to proton translocation.</text>
</comment>
<comment type="function">
    <text evidence="1">This protein is part of the stalk that links CF(0) to CF(1). It either transmits conformational changes from CF(0) to CF(1) or is implicated in proton conduction.</text>
</comment>
<comment type="subunit">
    <text evidence="1">F-type ATPases have 2 components, F(1) - the catalytic core - and F(0) - the membrane proton channel. F(1) has five subunits: alpha(3), beta(3), gamma(1), delta(1), epsilon(1). F(0) has three main subunits: a(1), b(2) and c(10-14). The alpha and beta chains form an alternating ring which encloses part of the gamma chain. F(1) is attached to F(0) by a central stalk formed by the gamma and epsilon chains, while a peripheral stalk is formed by the delta and b chains.</text>
</comment>
<comment type="subcellular location">
    <subcellularLocation>
        <location evidence="1">Cell membrane</location>
        <topology evidence="1">Peripheral membrane protein</topology>
    </subcellularLocation>
</comment>
<comment type="similarity">
    <text evidence="1">Belongs to the ATPase delta chain family.</text>
</comment>
<dbReference type="EMBL" id="AL935263">
    <property type="protein sequence ID" value="CCC79555.1"/>
    <property type="molecule type" value="Genomic_DNA"/>
</dbReference>
<dbReference type="RefSeq" id="WP_003641440.1">
    <property type="nucleotide sequence ID" value="NC_004567.2"/>
</dbReference>
<dbReference type="RefSeq" id="YP_004890069.1">
    <property type="nucleotide sequence ID" value="NC_004567.2"/>
</dbReference>
<dbReference type="SMR" id="Q88UU0"/>
<dbReference type="STRING" id="220668.lp_2367"/>
<dbReference type="EnsemblBacteria" id="CCC79555">
    <property type="protein sequence ID" value="CCC79555"/>
    <property type="gene ID" value="lp_2367"/>
</dbReference>
<dbReference type="GeneID" id="89669624"/>
<dbReference type="KEGG" id="lpl:lp_2367"/>
<dbReference type="PATRIC" id="fig|220668.9.peg.2000"/>
<dbReference type="eggNOG" id="COG0712">
    <property type="taxonomic scope" value="Bacteria"/>
</dbReference>
<dbReference type="HOGENOM" id="CLU_085114_4_1_9"/>
<dbReference type="OrthoDB" id="9786633at2"/>
<dbReference type="PhylomeDB" id="Q88UU0"/>
<dbReference type="Proteomes" id="UP000000432">
    <property type="component" value="Chromosome"/>
</dbReference>
<dbReference type="GO" id="GO:0005886">
    <property type="term" value="C:plasma membrane"/>
    <property type="evidence" value="ECO:0007669"/>
    <property type="project" value="UniProtKB-SubCell"/>
</dbReference>
<dbReference type="GO" id="GO:0045259">
    <property type="term" value="C:proton-transporting ATP synthase complex"/>
    <property type="evidence" value="ECO:0007669"/>
    <property type="project" value="UniProtKB-KW"/>
</dbReference>
<dbReference type="GO" id="GO:0046933">
    <property type="term" value="F:proton-transporting ATP synthase activity, rotational mechanism"/>
    <property type="evidence" value="ECO:0007669"/>
    <property type="project" value="UniProtKB-UniRule"/>
</dbReference>
<dbReference type="Gene3D" id="1.10.520.20">
    <property type="entry name" value="N-terminal domain of the delta subunit of the F1F0-ATP synthase"/>
    <property type="match status" value="1"/>
</dbReference>
<dbReference type="HAMAP" id="MF_01416">
    <property type="entry name" value="ATP_synth_delta_bact"/>
    <property type="match status" value="1"/>
</dbReference>
<dbReference type="InterPro" id="IPR026015">
    <property type="entry name" value="ATP_synth_OSCP/delta_N_sf"/>
</dbReference>
<dbReference type="InterPro" id="IPR020781">
    <property type="entry name" value="ATPase_OSCP/d_CS"/>
</dbReference>
<dbReference type="InterPro" id="IPR000711">
    <property type="entry name" value="ATPase_OSCP/dsu"/>
</dbReference>
<dbReference type="NCBIfam" id="TIGR01145">
    <property type="entry name" value="ATP_synt_delta"/>
    <property type="match status" value="1"/>
</dbReference>
<dbReference type="NCBIfam" id="NF004401">
    <property type="entry name" value="PRK05758.2-1"/>
    <property type="match status" value="1"/>
</dbReference>
<dbReference type="PANTHER" id="PTHR11910">
    <property type="entry name" value="ATP SYNTHASE DELTA CHAIN"/>
    <property type="match status" value="1"/>
</dbReference>
<dbReference type="Pfam" id="PF00213">
    <property type="entry name" value="OSCP"/>
    <property type="match status" value="1"/>
</dbReference>
<dbReference type="PRINTS" id="PR00125">
    <property type="entry name" value="ATPASEDELTA"/>
</dbReference>
<dbReference type="SUPFAM" id="SSF47928">
    <property type="entry name" value="N-terminal domain of the delta subunit of the F1F0-ATP synthase"/>
    <property type="match status" value="1"/>
</dbReference>
<dbReference type="PROSITE" id="PS00389">
    <property type="entry name" value="ATPASE_DELTA"/>
    <property type="match status" value="1"/>
</dbReference>